<protein>
    <recommendedName>
        <fullName>Clavesin-2</fullName>
    </recommendedName>
    <alternativeName>
        <fullName>Retinaldehyde-binding protein 1-like 2</fullName>
    </alternativeName>
</protein>
<feature type="chain" id="PRO_0000297653" description="Clavesin-2">
    <location>
        <begin position="1"/>
        <end position="327"/>
    </location>
</feature>
<feature type="domain" description="CRAL-TRIO" evidence="2">
    <location>
        <begin position="96"/>
        <end position="257"/>
    </location>
</feature>
<feature type="region of interest" description="Disordered" evidence="3">
    <location>
        <begin position="289"/>
        <end position="327"/>
    </location>
</feature>
<feature type="splice variant" id="VSP_027326" description="In isoform 2." evidence="4">
    <original>DSFPARFGGIHFVNQPWYIHALYTVIRPFLKEKTRKRIF</original>
    <variation>VRVHHCYCFFVSCMVLALFVMYWVSYEIVKTPNQKFIDF</variation>
    <location>
        <begin position="189"/>
        <end position="227"/>
    </location>
</feature>
<feature type="splice variant" id="VSP_027327" description="In isoform 2." evidence="4">
    <location>
        <begin position="228"/>
        <end position="327"/>
    </location>
</feature>
<comment type="function">
    <text evidence="1">Required for normal morphology of late endosomes and/or lysosomes in neurons. Binds phosphatidylinositol 3,5-bisphosphate (PtdIns(3,5)P2) (By similarity).</text>
</comment>
<comment type="subunit">
    <text evidence="1">Forms a complex with clathrin heavy chain and gamma-adaptin.</text>
</comment>
<comment type="subcellular location">
    <subcellularLocation>
        <location evidence="1">Golgi apparatus</location>
        <location evidence="1">trans-Golgi network membrane</location>
        <topology evidence="1">Peripheral membrane protein</topology>
    </subcellularLocation>
    <subcellularLocation>
        <location evidence="1">Early endosome membrane</location>
        <topology evidence="1">Peripheral membrane protein</topology>
    </subcellularLocation>
    <subcellularLocation>
        <location evidence="1">Cytoplasmic vesicle</location>
        <location evidence="1">Clathrin-coated vesicle</location>
    </subcellularLocation>
</comment>
<comment type="alternative products">
    <event type="alternative splicing"/>
    <isoform>
        <id>Q8BG92-1</id>
        <name>1</name>
        <sequence type="displayed"/>
    </isoform>
    <isoform>
        <id>Q8BG92-2</id>
        <name>2</name>
        <sequence type="described" ref="VSP_027326 VSP_027327"/>
    </isoform>
</comment>
<comment type="domain">
    <text evidence="1">The CRAL-TRIO domain is required for targeting to the membrane and for binding PtdIns(3,5)P2.</text>
</comment>
<comment type="miscellaneous">
    <text evidence="1">Binding to PtdIns(3,5)P2 is not required for localization.</text>
</comment>
<organism>
    <name type="scientific">Mus musculus</name>
    <name type="common">Mouse</name>
    <dbReference type="NCBI Taxonomy" id="10090"/>
    <lineage>
        <taxon>Eukaryota</taxon>
        <taxon>Metazoa</taxon>
        <taxon>Chordata</taxon>
        <taxon>Craniata</taxon>
        <taxon>Vertebrata</taxon>
        <taxon>Euteleostomi</taxon>
        <taxon>Mammalia</taxon>
        <taxon>Eutheria</taxon>
        <taxon>Euarchontoglires</taxon>
        <taxon>Glires</taxon>
        <taxon>Rodentia</taxon>
        <taxon>Myomorpha</taxon>
        <taxon>Muroidea</taxon>
        <taxon>Muridae</taxon>
        <taxon>Murinae</taxon>
        <taxon>Mus</taxon>
        <taxon>Mus</taxon>
    </lineage>
</organism>
<dbReference type="EMBL" id="AK039308">
    <property type="protein sequence ID" value="BAC30312.1"/>
    <property type="molecule type" value="mRNA"/>
</dbReference>
<dbReference type="EMBL" id="AK049896">
    <property type="protein sequence ID" value="BAC33976.1"/>
    <property type="molecule type" value="mRNA"/>
</dbReference>
<dbReference type="EMBL" id="AK053797">
    <property type="protein sequence ID" value="BAC35529.1"/>
    <property type="molecule type" value="mRNA"/>
</dbReference>
<dbReference type="EMBL" id="AK139409">
    <property type="protein sequence ID" value="BAE23998.1"/>
    <property type="molecule type" value="mRNA"/>
</dbReference>
<dbReference type="EMBL" id="AK169009">
    <property type="protein sequence ID" value="BAE40806.1"/>
    <property type="molecule type" value="mRNA"/>
</dbReference>
<dbReference type="EMBL" id="BC058539">
    <property type="protein sequence ID" value="AAH58539.1"/>
    <property type="molecule type" value="mRNA"/>
</dbReference>
<dbReference type="CCDS" id="CCDS23770.1">
    <molecule id="Q8BG92-1"/>
</dbReference>
<dbReference type="RefSeq" id="NP_780657.1">
    <molecule id="Q8BG92-1"/>
    <property type="nucleotide sequence ID" value="NM_175448.4"/>
</dbReference>
<dbReference type="RefSeq" id="XP_017169371.1">
    <property type="nucleotide sequence ID" value="XM_017313882.1"/>
</dbReference>
<dbReference type="SMR" id="Q8BG92"/>
<dbReference type="FunCoup" id="Q8BG92">
    <property type="interactions" value="264"/>
</dbReference>
<dbReference type="STRING" id="10090.ENSMUSP00000019920"/>
<dbReference type="iPTMnet" id="Q8BG92"/>
<dbReference type="PhosphoSitePlus" id="Q8BG92"/>
<dbReference type="PaxDb" id="10090-ENSMUSP00000019920"/>
<dbReference type="PeptideAtlas" id="Q8BG92"/>
<dbReference type="ProteomicsDB" id="281691">
    <molecule id="Q8BG92-1"/>
</dbReference>
<dbReference type="ProteomicsDB" id="281692">
    <molecule id="Q8BG92-2"/>
</dbReference>
<dbReference type="Antibodypedia" id="46590">
    <property type="antibodies" value="87 antibodies from 20 providers"/>
</dbReference>
<dbReference type="DNASU" id="215890"/>
<dbReference type="Ensembl" id="ENSMUST00000019920.13">
    <molecule id="Q8BG92-1"/>
    <property type="protein sequence ID" value="ENSMUSP00000019920.7"/>
    <property type="gene ID" value="ENSMUSG00000019785.15"/>
</dbReference>
<dbReference type="Ensembl" id="ENSMUST00000160299.2">
    <molecule id="Q8BG92-2"/>
    <property type="protein sequence ID" value="ENSMUSP00000125100.2"/>
    <property type="gene ID" value="ENSMUSG00000019785.15"/>
</dbReference>
<dbReference type="GeneID" id="215890"/>
<dbReference type="KEGG" id="mmu:215890"/>
<dbReference type="UCSC" id="uc007eue.1">
    <molecule id="Q8BG92-1"/>
    <property type="organism name" value="mouse"/>
</dbReference>
<dbReference type="UCSC" id="uc007euf.1">
    <molecule id="Q8BG92-2"/>
    <property type="organism name" value="mouse"/>
</dbReference>
<dbReference type="AGR" id="MGI:2443223"/>
<dbReference type="CTD" id="134829"/>
<dbReference type="MGI" id="MGI:2443223">
    <property type="gene designation" value="Clvs2"/>
</dbReference>
<dbReference type="VEuPathDB" id="HostDB:ENSMUSG00000019785"/>
<dbReference type="eggNOG" id="KOG1471">
    <property type="taxonomic scope" value="Eukaryota"/>
</dbReference>
<dbReference type="GeneTree" id="ENSGT00940000157632"/>
<dbReference type="HOGENOM" id="CLU_046597_1_3_1"/>
<dbReference type="InParanoid" id="Q8BG92"/>
<dbReference type="OMA" id="DEEPDYC"/>
<dbReference type="OrthoDB" id="7837562at2759"/>
<dbReference type="PhylomeDB" id="Q8BG92"/>
<dbReference type="Reactome" id="R-MMU-432720">
    <property type="pathway name" value="Lysosome Vesicle Biogenesis"/>
</dbReference>
<dbReference type="BioGRID-ORCS" id="215890">
    <property type="hits" value="2 hits in 76 CRISPR screens"/>
</dbReference>
<dbReference type="PRO" id="PR:Q8BG92"/>
<dbReference type="Proteomes" id="UP000000589">
    <property type="component" value="Chromosome 10"/>
</dbReference>
<dbReference type="RNAct" id="Q8BG92">
    <property type="molecule type" value="protein"/>
</dbReference>
<dbReference type="Bgee" id="ENSMUSG00000019785">
    <property type="expression patterns" value="Expressed in secondary oocyte and 96 other cell types or tissues"/>
</dbReference>
<dbReference type="ExpressionAtlas" id="Q8BG92">
    <property type="expression patterns" value="baseline and differential"/>
</dbReference>
<dbReference type="GO" id="GO:0030136">
    <property type="term" value="C:clathrin-coated vesicle"/>
    <property type="evidence" value="ECO:0000250"/>
    <property type="project" value="UniProtKB"/>
</dbReference>
<dbReference type="GO" id="GO:0031901">
    <property type="term" value="C:early endosome membrane"/>
    <property type="evidence" value="ECO:0007669"/>
    <property type="project" value="UniProtKB-SubCell"/>
</dbReference>
<dbReference type="GO" id="GO:0005768">
    <property type="term" value="C:endosome"/>
    <property type="evidence" value="ECO:0000250"/>
    <property type="project" value="UniProtKB"/>
</dbReference>
<dbReference type="GO" id="GO:0005802">
    <property type="term" value="C:trans-Golgi network"/>
    <property type="evidence" value="ECO:0000250"/>
    <property type="project" value="UniProtKB"/>
</dbReference>
<dbReference type="GO" id="GO:0080025">
    <property type="term" value="F:phosphatidylinositol-3,5-bisphosphate binding"/>
    <property type="evidence" value="ECO:0000250"/>
    <property type="project" value="UniProtKB"/>
</dbReference>
<dbReference type="GO" id="GO:0007040">
    <property type="term" value="P:lysosome organization"/>
    <property type="evidence" value="ECO:0000250"/>
    <property type="project" value="UniProtKB"/>
</dbReference>
<dbReference type="CDD" id="cd00170">
    <property type="entry name" value="SEC14"/>
    <property type="match status" value="1"/>
</dbReference>
<dbReference type="FunFam" id="1.10.8.20:FF:000001">
    <property type="entry name" value="Alpha-tocopherol transfer protein-like"/>
    <property type="match status" value="1"/>
</dbReference>
<dbReference type="FunFam" id="3.40.525.10:FF:000002">
    <property type="entry name" value="Alpha-tocopherol transfer protein-like"/>
    <property type="match status" value="1"/>
</dbReference>
<dbReference type="FunFam" id="1.20.5.1200:FF:000001">
    <property type="entry name" value="Clavesin 2"/>
    <property type="match status" value="1"/>
</dbReference>
<dbReference type="Gene3D" id="1.20.5.1200">
    <property type="entry name" value="Alpha-tocopherol transfer"/>
    <property type="match status" value="1"/>
</dbReference>
<dbReference type="Gene3D" id="3.40.525.10">
    <property type="entry name" value="CRAL-TRIO lipid binding domain"/>
    <property type="match status" value="1"/>
</dbReference>
<dbReference type="Gene3D" id="1.10.8.20">
    <property type="entry name" value="N-terminal domain of phosphatidylinositol transfer protein sec14p"/>
    <property type="match status" value="1"/>
</dbReference>
<dbReference type="InterPro" id="IPR001251">
    <property type="entry name" value="CRAL-TRIO_dom"/>
</dbReference>
<dbReference type="InterPro" id="IPR036865">
    <property type="entry name" value="CRAL-TRIO_dom_sf"/>
</dbReference>
<dbReference type="InterPro" id="IPR011074">
    <property type="entry name" value="CRAL/TRIO_N_dom"/>
</dbReference>
<dbReference type="InterPro" id="IPR036273">
    <property type="entry name" value="CRAL/TRIO_N_dom_sf"/>
</dbReference>
<dbReference type="PANTHER" id="PTHR10174">
    <property type="entry name" value="ALPHA-TOCOPHEROL TRANSFER PROTEIN-RELATED"/>
    <property type="match status" value="1"/>
</dbReference>
<dbReference type="PANTHER" id="PTHR10174:SF73">
    <property type="entry name" value="CLAVESIN-2"/>
    <property type="match status" value="1"/>
</dbReference>
<dbReference type="Pfam" id="PF00650">
    <property type="entry name" value="CRAL_TRIO"/>
    <property type="match status" value="1"/>
</dbReference>
<dbReference type="Pfam" id="PF03765">
    <property type="entry name" value="CRAL_TRIO_N"/>
    <property type="match status" value="1"/>
</dbReference>
<dbReference type="PRINTS" id="PR00180">
    <property type="entry name" value="CRETINALDHBP"/>
</dbReference>
<dbReference type="SMART" id="SM01100">
    <property type="entry name" value="CRAL_TRIO_N"/>
    <property type="match status" value="1"/>
</dbReference>
<dbReference type="SMART" id="SM00516">
    <property type="entry name" value="SEC14"/>
    <property type="match status" value="1"/>
</dbReference>
<dbReference type="SUPFAM" id="SSF52087">
    <property type="entry name" value="CRAL/TRIO domain"/>
    <property type="match status" value="1"/>
</dbReference>
<dbReference type="SUPFAM" id="SSF46938">
    <property type="entry name" value="CRAL/TRIO N-terminal domain"/>
    <property type="match status" value="1"/>
</dbReference>
<dbReference type="PROSITE" id="PS50191">
    <property type="entry name" value="CRAL_TRIO"/>
    <property type="match status" value="1"/>
</dbReference>
<reference key="1">
    <citation type="journal article" date="2005" name="Science">
        <title>The transcriptional landscape of the mammalian genome.</title>
        <authorList>
            <person name="Carninci P."/>
            <person name="Kasukawa T."/>
            <person name="Katayama S."/>
            <person name="Gough J."/>
            <person name="Frith M.C."/>
            <person name="Maeda N."/>
            <person name="Oyama R."/>
            <person name="Ravasi T."/>
            <person name="Lenhard B."/>
            <person name="Wells C."/>
            <person name="Kodzius R."/>
            <person name="Shimokawa K."/>
            <person name="Bajic V.B."/>
            <person name="Brenner S.E."/>
            <person name="Batalov S."/>
            <person name="Forrest A.R."/>
            <person name="Zavolan M."/>
            <person name="Davis M.J."/>
            <person name="Wilming L.G."/>
            <person name="Aidinis V."/>
            <person name="Allen J.E."/>
            <person name="Ambesi-Impiombato A."/>
            <person name="Apweiler R."/>
            <person name="Aturaliya R.N."/>
            <person name="Bailey T.L."/>
            <person name="Bansal M."/>
            <person name="Baxter L."/>
            <person name="Beisel K.W."/>
            <person name="Bersano T."/>
            <person name="Bono H."/>
            <person name="Chalk A.M."/>
            <person name="Chiu K.P."/>
            <person name="Choudhary V."/>
            <person name="Christoffels A."/>
            <person name="Clutterbuck D.R."/>
            <person name="Crowe M.L."/>
            <person name="Dalla E."/>
            <person name="Dalrymple B.P."/>
            <person name="de Bono B."/>
            <person name="Della Gatta G."/>
            <person name="di Bernardo D."/>
            <person name="Down T."/>
            <person name="Engstrom P."/>
            <person name="Fagiolini M."/>
            <person name="Faulkner G."/>
            <person name="Fletcher C.F."/>
            <person name="Fukushima T."/>
            <person name="Furuno M."/>
            <person name="Futaki S."/>
            <person name="Gariboldi M."/>
            <person name="Georgii-Hemming P."/>
            <person name="Gingeras T.R."/>
            <person name="Gojobori T."/>
            <person name="Green R.E."/>
            <person name="Gustincich S."/>
            <person name="Harbers M."/>
            <person name="Hayashi Y."/>
            <person name="Hensch T.K."/>
            <person name="Hirokawa N."/>
            <person name="Hill D."/>
            <person name="Huminiecki L."/>
            <person name="Iacono M."/>
            <person name="Ikeo K."/>
            <person name="Iwama A."/>
            <person name="Ishikawa T."/>
            <person name="Jakt M."/>
            <person name="Kanapin A."/>
            <person name="Katoh M."/>
            <person name="Kawasawa Y."/>
            <person name="Kelso J."/>
            <person name="Kitamura H."/>
            <person name="Kitano H."/>
            <person name="Kollias G."/>
            <person name="Krishnan S.P."/>
            <person name="Kruger A."/>
            <person name="Kummerfeld S.K."/>
            <person name="Kurochkin I.V."/>
            <person name="Lareau L.F."/>
            <person name="Lazarevic D."/>
            <person name="Lipovich L."/>
            <person name="Liu J."/>
            <person name="Liuni S."/>
            <person name="McWilliam S."/>
            <person name="Madan Babu M."/>
            <person name="Madera M."/>
            <person name="Marchionni L."/>
            <person name="Matsuda H."/>
            <person name="Matsuzawa S."/>
            <person name="Miki H."/>
            <person name="Mignone F."/>
            <person name="Miyake S."/>
            <person name="Morris K."/>
            <person name="Mottagui-Tabar S."/>
            <person name="Mulder N."/>
            <person name="Nakano N."/>
            <person name="Nakauchi H."/>
            <person name="Ng P."/>
            <person name="Nilsson R."/>
            <person name="Nishiguchi S."/>
            <person name="Nishikawa S."/>
            <person name="Nori F."/>
            <person name="Ohara O."/>
            <person name="Okazaki Y."/>
            <person name="Orlando V."/>
            <person name="Pang K.C."/>
            <person name="Pavan W.J."/>
            <person name="Pavesi G."/>
            <person name="Pesole G."/>
            <person name="Petrovsky N."/>
            <person name="Piazza S."/>
            <person name="Reed J."/>
            <person name="Reid J.F."/>
            <person name="Ring B.Z."/>
            <person name="Ringwald M."/>
            <person name="Rost B."/>
            <person name="Ruan Y."/>
            <person name="Salzberg S.L."/>
            <person name="Sandelin A."/>
            <person name="Schneider C."/>
            <person name="Schoenbach C."/>
            <person name="Sekiguchi K."/>
            <person name="Semple C.A."/>
            <person name="Seno S."/>
            <person name="Sessa L."/>
            <person name="Sheng Y."/>
            <person name="Shibata Y."/>
            <person name="Shimada H."/>
            <person name="Shimada K."/>
            <person name="Silva D."/>
            <person name="Sinclair B."/>
            <person name="Sperling S."/>
            <person name="Stupka E."/>
            <person name="Sugiura K."/>
            <person name="Sultana R."/>
            <person name="Takenaka Y."/>
            <person name="Taki K."/>
            <person name="Tammoja K."/>
            <person name="Tan S.L."/>
            <person name="Tang S."/>
            <person name="Taylor M.S."/>
            <person name="Tegner J."/>
            <person name="Teichmann S.A."/>
            <person name="Ueda H.R."/>
            <person name="van Nimwegen E."/>
            <person name="Verardo R."/>
            <person name="Wei C.L."/>
            <person name="Yagi K."/>
            <person name="Yamanishi H."/>
            <person name="Zabarovsky E."/>
            <person name="Zhu S."/>
            <person name="Zimmer A."/>
            <person name="Hide W."/>
            <person name="Bult C."/>
            <person name="Grimmond S.M."/>
            <person name="Teasdale R.D."/>
            <person name="Liu E.T."/>
            <person name="Brusic V."/>
            <person name="Quackenbush J."/>
            <person name="Wahlestedt C."/>
            <person name="Mattick J.S."/>
            <person name="Hume D.A."/>
            <person name="Kai C."/>
            <person name="Sasaki D."/>
            <person name="Tomaru Y."/>
            <person name="Fukuda S."/>
            <person name="Kanamori-Katayama M."/>
            <person name="Suzuki M."/>
            <person name="Aoki J."/>
            <person name="Arakawa T."/>
            <person name="Iida J."/>
            <person name="Imamura K."/>
            <person name="Itoh M."/>
            <person name="Kato T."/>
            <person name="Kawaji H."/>
            <person name="Kawagashira N."/>
            <person name="Kawashima T."/>
            <person name="Kojima M."/>
            <person name="Kondo S."/>
            <person name="Konno H."/>
            <person name="Nakano K."/>
            <person name="Ninomiya N."/>
            <person name="Nishio T."/>
            <person name="Okada M."/>
            <person name="Plessy C."/>
            <person name="Shibata K."/>
            <person name="Shiraki T."/>
            <person name="Suzuki S."/>
            <person name="Tagami M."/>
            <person name="Waki K."/>
            <person name="Watahiki A."/>
            <person name="Okamura-Oho Y."/>
            <person name="Suzuki H."/>
            <person name="Kawai J."/>
            <person name="Hayashizaki Y."/>
        </authorList>
    </citation>
    <scope>NUCLEOTIDE SEQUENCE [LARGE SCALE MRNA] (ISOFORMS 1 AND 2)</scope>
    <source>
        <strain>C57BL/6J</strain>
        <tissue>Brain cortex</tissue>
        <tissue>Eye</tissue>
        <tissue>Hippocampus</tissue>
        <tissue>Spinal cord</tissue>
        <tissue>Stomach</tissue>
    </source>
</reference>
<reference key="2">
    <citation type="journal article" date="2004" name="Genome Res.">
        <title>The status, quality, and expansion of the NIH full-length cDNA project: the Mammalian Gene Collection (MGC).</title>
        <authorList>
            <consortium name="The MGC Project Team"/>
        </authorList>
    </citation>
    <scope>NUCLEOTIDE SEQUENCE [LARGE SCALE MRNA] (ISOFORM 1)</scope>
    <source>
        <strain>C57BL/6J</strain>
        <tissue>Brain</tissue>
    </source>
</reference>
<reference key="3">
    <citation type="journal article" date="2010" name="Cell">
        <title>A tissue-specific atlas of mouse protein phosphorylation and expression.</title>
        <authorList>
            <person name="Huttlin E.L."/>
            <person name="Jedrychowski M.P."/>
            <person name="Elias J.E."/>
            <person name="Goswami T."/>
            <person name="Rad R."/>
            <person name="Beausoleil S.A."/>
            <person name="Villen J."/>
            <person name="Haas W."/>
            <person name="Sowa M.E."/>
            <person name="Gygi S.P."/>
        </authorList>
    </citation>
    <scope>IDENTIFICATION BY MASS SPECTROMETRY [LARGE SCALE ANALYSIS]</scope>
    <source>
        <tissue>Brain</tissue>
    </source>
</reference>
<accession>Q8BG92</accession>
<accession>Q8BKA5</accession>
<proteinExistence type="evidence at protein level"/>
<sequence length="327" mass="37954">MTHLQAGLSPETLEKARLELNENPDTLHQDIQEVRDMVITRPDIGFLRTDDAFILRFLRARKFHHFEAFRLLAQYFEYRQQNLDMFKSFKATDPGIKQALKDGFPGGLANLDHYGRKILVLFAANWDQSRYTLVDILRAILLSLEAMIEDPELQVNGFVLIIDWSNFTFKQASKLTPNMLRLAIEGLQDSFPARFGGIHFVNQPWYIHALYTVIRPFLKEKTRKRIFLHGNNLNSLHQLIHPEILPSEFGGMLPPYDMGTWARTLLDHEYDDDSEYNVDSYNMPVKDVDKELSPKSMKRSQSVVDPTALKRMDKSEEENMQPLLALD</sequence>
<name>CLVS2_MOUSE</name>
<keyword id="KW-0025">Alternative splicing</keyword>
<keyword id="KW-0968">Cytoplasmic vesicle</keyword>
<keyword id="KW-0967">Endosome</keyword>
<keyword id="KW-0333">Golgi apparatus</keyword>
<keyword id="KW-0446">Lipid-binding</keyword>
<keyword id="KW-0472">Membrane</keyword>
<keyword id="KW-1185">Reference proteome</keyword>
<gene>
    <name type="primary">Clvs2</name>
    <name type="synonym">Rlbp1l2</name>
</gene>
<evidence type="ECO:0000250" key="1"/>
<evidence type="ECO:0000255" key="2">
    <source>
        <dbReference type="PROSITE-ProRule" id="PRU00056"/>
    </source>
</evidence>
<evidence type="ECO:0000256" key="3">
    <source>
        <dbReference type="SAM" id="MobiDB-lite"/>
    </source>
</evidence>
<evidence type="ECO:0000303" key="4">
    <source>
    </source>
</evidence>